<dbReference type="EC" id="5.5.1.4" evidence="1"/>
<dbReference type="EMBL" id="CP000480">
    <property type="protein sequence ID" value="ABK72827.1"/>
    <property type="molecule type" value="Genomic_DNA"/>
</dbReference>
<dbReference type="EMBL" id="CP001663">
    <property type="protein sequence ID" value="AFP43146.1"/>
    <property type="molecule type" value="Genomic_DNA"/>
</dbReference>
<dbReference type="RefSeq" id="WP_011731620.1">
    <property type="nucleotide sequence ID" value="NZ_SIJM01000001.1"/>
</dbReference>
<dbReference type="RefSeq" id="YP_891104.1">
    <property type="nucleotide sequence ID" value="NC_008596.1"/>
</dbReference>
<dbReference type="SMR" id="A0R7G6"/>
<dbReference type="STRING" id="246196.MSMEG_6904"/>
<dbReference type="PaxDb" id="246196-MSMEI_6720"/>
<dbReference type="KEGG" id="msb:LJ00_34115"/>
<dbReference type="KEGG" id="msg:MSMEI_6720"/>
<dbReference type="KEGG" id="msm:MSMEG_6904"/>
<dbReference type="PATRIC" id="fig|246196.19.peg.6725"/>
<dbReference type="eggNOG" id="COG1260">
    <property type="taxonomic scope" value="Bacteria"/>
</dbReference>
<dbReference type="OrthoDB" id="9766811at2"/>
<dbReference type="Proteomes" id="UP000000757">
    <property type="component" value="Chromosome"/>
</dbReference>
<dbReference type="Proteomes" id="UP000006158">
    <property type="component" value="Chromosome"/>
</dbReference>
<dbReference type="GO" id="GO:0004512">
    <property type="term" value="F:inositol-3-phosphate synthase activity"/>
    <property type="evidence" value="ECO:0007669"/>
    <property type="project" value="UniProtKB-EC"/>
</dbReference>
<dbReference type="GO" id="GO:0006021">
    <property type="term" value="P:inositol biosynthetic process"/>
    <property type="evidence" value="ECO:0007669"/>
    <property type="project" value="UniProtKB-KW"/>
</dbReference>
<dbReference type="GO" id="GO:0008654">
    <property type="term" value="P:phospholipid biosynthetic process"/>
    <property type="evidence" value="ECO:0007669"/>
    <property type="project" value="InterPro"/>
</dbReference>
<dbReference type="Gene3D" id="3.30.360.10">
    <property type="entry name" value="Dihydrodipicolinate Reductase, domain 2"/>
    <property type="match status" value="1"/>
</dbReference>
<dbReference type="Gene3D" id="3.40.50.720">
    <property type="entry name" value="NAD(P)-binding Rossmann-like Domain"/>
    <property type="match status" value="1"/>
</dbReference>
<dbReference type="InterPro" id="IPR052199">
    <property type="entry name" value="MIPS"/>
</dbReference>
<dbReference type="InterPro" id="IPR002587">
    <property type="entry name" value="Myo-inos-1-P_Synthase"/>
</dbReference>
<dbReference type="InterPro" id="IPR017815">
    <property type="entry name" value="Myo-inos-1-P_Synthase_actino"/>
</dbReference>
<dbReference type="InterPro" id="IPR013021">
    <property type="entry name" value="Myo-inos-1-P_Synthase_GAPDH"/>
</dbReference>
<dbReference type="InterPro" id="IPR036291">
    <property type="entry name" value="NAD(P)-bd_dom_sf"/>
</dbReference>
<dbReference type="NCBIfam" id="TIGR03450">
    <property type="entry name" value="mycothiol_INO1"/>
    <property type="match status" value="1"/>
</dbReference>
<dbReference type="PANTHER" id="PTHR43125">
    <property type="entry name" value="INOSITOL-3-PHOSPHATE SYNTHASE"/>
    <property type="match status" value="1"/>
</dbReference>
<dbReference type="PANTHER" id="PTHR43125:SF1">
    <property type="entry name" value="INOSITOL-3-PHOSPHATE SYNTHASE"/>
    <property type="match status" value="1"/>
</dbReference>
<dbReference type="Pfam" id="PF01658">
    <property type="entry name" value="Inos-1-P_synth"/>
    <property type="match status" value="1"/>
</dbReference>
<dbReference type="PIRSF" id="PIRSF015578">
    <property type="entry name" value="Myoinos-ppht_syn"/>
    <property type="match status" value="1"/>
</dbReference>
<dbReference type="SUPFAM" id="SSF55347">
    <property type="entry name" value="Glyceraldehyde-3-phosphate dehydrogenase-like, C-terminal domain"/>
    <property type="match status" value="1"/>
</dbReference>
<dbReference type="SUPFAM" id="SSF51735">
    <property type="entry name" value="NAD(P)-binding Rossmann-fold domains"/>
    <property type="match status" value="1"/>
</dbReference>
<gene>
    <name type="primary">ino1</name>
    <name type="ordered locus">MSMEG_6904</name>
    <name type="ordered locus">MSMEI_6720</name>
</gene>
<feature type="chain" id="PRO_0000383479" description="Inositol-3-phosphate synthase">
    <location>
        <begin position="1"/>
        <end position="363"/>
    </location>
</feature>
<feature type="binding site" evidence="1">
    <location>
        <position position="70"/>
    </location>
    <ligand>
        <name>NAD(+)</name>
        <dbReference type="ChEBI" id="CHEBI:57540"/>
    </ligand>
</feature>
<feature type="binding site" evidence="1">
    <location>
        <position position="129"/>
    </location>
    <ligand>
        <name>NAD(+)</name>
        <dbReference type="ChEBI" id="CHEBI:57540"/>
    </ligand>
</feature>
<feature type="binding site" evidence="1">
    <location>
        <position position="149"/>
    </location>
    <ligand>
        <name>NAD(+)</name>
        <dbReference type="ChEBI" id="CHEBI:57540"/>
    </ligand>
</feature>
<feature type="binding site" evidence="1">
    <location>
        <position position="192"/>
    </location>
    <ligand>
        <name>NAD(+)</name>
        <dbReference type="ChEBI" id="CHEBI:57540"/>
    </ligand>
</feature>
<feature type="binding site" evidence="1">
    <location>
        <position position="227"/>
    </location>
    <ligand>
        <name>NAD(+)</name>
        <dbReference type="ChEBI" id="CHEBI:57540"/>
    </ligand>
</feature>
<feature type="binding site" evidence="1">
    <location>
        <position position="240"/>
    </location>
    <ligand>
        <name>NAD(+)</name>
        <dbReference type="ChEBI" id="CHEBI:57540"/>
    </ligand>
</feature>
<feature type="cross-link" description="Isoglutamyl lysine isopeptide (Lys-Gln) (interchain with Q-Cter in protein Pup)" evidence="2 3">
    <location>
        <position position="65"/>
    </location>
</feature>
<evidence type="ECO:0000250" key="1">
    <source>
        <dbReference type="UniProtKB" id="Q8A7J8"/>
    </source>
</evidence>
<evidence type="ECO:0000269" key="2">
    <source>
    </source>
</evidence>
<evidence type="ECO:0000269" key="3">
    <source>
    </source>
</evidence>
<evidence type="ECO:0000305" key="4"/>
<sequence>MSEHAGEIRVAIVGVGNCASSLVQGVQYYRNADENTTVPGLMHVKFGPYHVRDVNFVAAFDVDAKKVGFDLSEAIFASENNTIKIADVPPTDVIVQRGPTLDGIGKYYADTIEVSDAEPVDVVKVLKEAEVDVLVSYLPVGSEEADKFYAQCAIDAGVAFVNALPVFIASDPVWAKKFEDAGVPIVGDDIKSQVGATITHRVMAKLFEDRGVTLDRTYQLNVGGNMDFLNMLERSRLESKKVSKTQAVTSNLSGALAGKVEDKNVHIGPSDHVAWLDDRKWAYVRLEGRAFGDVPLNLEYKLEVWDSPNSAGVIIDAVRAAKIAKDRGIGGPIEAASAYLMKSPPKQLADDVARAELETFIEG</sequence>
<reference key="1">
    <citation type="submission" date="2006-10" db="EMBL/GenBank/DDBJ databases">
        <authorList>
            <person name="Fleischmann R.D."/>
            <person name="Dodson R.J."/>
            <person name="Haft D.H."/>
            <person name="Merkel J.S."/>
            <person name="Nelson W.C."/>
            <person name="Fraser C.M."/>
        </authorList>
    </citation>
    <scope>NUCLEOTIDE SEQUENCE [LARGE SCALE GENOMIC DNA]</scope>
    <source>
        <strain>ATCC 700084 / mc(2)155</strain>
    </source>
</reference>
<reference key="2">
    <citation type="journal article" date="2007" name="Genome Biol.">
        <title>Interrupted coding sequences in Mycobacterium smegmatis: authentic mutations or sequencing errors?</title>
        <authorList>
            <person name="Deshayes C."/>
            <person name="Perrodou E."/>
            <person name="Gallien S."/>
            <person name="Euphrasie D."/>
            <person name="Schaeffer C."/>
            <person name="Van-Dorsselaer A."/>
            <person name="Poch O."/>
            <person name="Lecompte O."/>
            <person name="Reyrat J.-M."/>
        </authorList>
    </citation>
    <scope>NUCLEOTIDE SEQUENCE [LARGE SCALE GENOMIC DNA]</scope>
    <source>
        <strain>ATCC 700084 / mc(2)155</strain>
    </source>
</reference>
<reference key="3">
    <citation type="journal article" date="2009" name="Genome Res.">
        <title>Ortho-proteogenomics: multiple proteomes investigation through orthology and a new MS-based protocol.</title>
        <authorList>
            <person name="Gallien S."/>
            <person name="Perrodou E."/>
            <person name="Carapito C."/>
            <person name="Deshayes C."/>
            <person name="Reyrat J.-M."/>
            <person name="Van Dorsselaer A."/>
            <person name="Poch O."/>
            <person name="Schaeffer C."/>
            <person name="Lecompte O."/>
        </authorList>
    </citation>
    <scope>NUCLEOTIDE SEQUENCE [LARGE SCALE GENOMIC DNA]</scope>
    <source>
        <strain>ATCC 700084 / mc(2)155</strain>
    </source>
</reference>
<reference key="4">
    <citation type="journal article" date="2009" name="J. Biol. Chem.">
        <title>Proteasomal protein degradation in mycobacteria is dependent upon a prokaryotic ubiquitin-like protein.</title>
        <authorList>
            <person name="Burns K.E."/>
            <person name="Liu W.-T."/>
            <person name="Boshoff H.I.M."/>
            <person name="Dorrestein P.C."/>
            <person name="Barry C.E. III"/>
        </authorList>
    </citation>
    <scope>PROTEASOME SUBSTRATE</scope>
    <scope>PUPYLATION AT LYS-65</scope>
    <scope>IDENTIFICATION BY MASS SPECTROMETRY</scope>
</reference>
<reference key="5">
    <citation type="journal article" date="2010" name="Mol. Biosyst.">
        <title>Expansion of the mycobacterial 'PUPylome'.</title>
        <authorList>
            <person name="Watrous J."/>
            <person name="Burns K."/>
            <person name="Liu W.T."/>
            <person name="Patel A."/>
            <person name="Hook V."/>
            <person name="Bafna V."/>
            <person name="Barry C.E. III"/>
            <person name="Bark S."/>
            <person name="Dorrestein P.C."/>
        </authorList>
    </citation>
    <scope>PUPYLATION AT LYS-65</scope>
    <scope>IDENTIFICATION BY MASS SPECTROMETRY</scope>
</reference>
<comment type="function">
    <text evidence="1">Key enzyme in myo-inositol biosynthesis pathway that catalyzes the conversion of glucose 6-phosphate to 1D-myo-inositol 3-phosphate in a NAD-dependent manner.</text>
</comment>
<comment type="catalytic activity">
    <reaction evidence="1">
        <text>D-glucose 6-phosphate = 1D-myo-inositol 3-phosphate</text>
        <dbReference type="Rhea" id="RHEA:10716"/>
        <dbReference type="ChEBI" id="CHEBI:58401"/>
        <dbReference type="ChEBI" id="CHEBI:61548"/>
        <dbReference type="EC" id="5.5.1.4"/>
    </reaction>
</comment>
<comment type="cofactor">
    <cofactor evidence="1">
        <name>NAD(+)</name>
        <dbReference type="ChEBI" id="CHEBI:57540"/>
    </cofactor>
</comment>
<comment type="PTM">
    <text evidence="2 3">Pupylated at Lys-65 by the prokaryotic ubiquitin-like protein Pup, which leads to its degradation by the proteasome.</text>
</comment>
<comment type="miscellaneous">
    <text>Was identified as a natural substrate of the M.smegmatis proteasome.</text>
</comment>
<comment type="similarity">
    <text evidence="4">Belongs to the myo-inositol 1-phosphate synthase family.</text>
</comment>
<proteinExistence type="evidence at protein level"/>
<accession>A0R7G6</accession>
<accession>I7GGA1</accession>
<organism>
    <name type="scientific">Mycolicibacterium smegmatis (strain ATCC 700084 / mc(2)155)</name>
    <name type="common">Mycobacterium smegmatis</name>
    <dbReference type="NCBI Taxonomy" id="246196"/>
    <lineage>
        <taxon>Bacteria</taxon>
        <taxon>Bacillati</taxon>
        <taxon>Actinomycetota</taxon>
        <taxon>Actinomycetes</taxon>
        <taxon>Mycobacteriales</taxon>
        <taxon>Mycobacteriaceae</taxon>
        <taxon>Mycolicibacterium</taxon>
    </lineage>
</organism>
<protein>
    <recommendedName>
        <fullName>Inositol-3-phosphate synthase</fullName>
        <shortName>IPS</shortName>
        <ecNumber evidence="1">5.5.1.4</ecNumber>
    </recommendedName>
    <alternativeName>
        <fullName>Myo-inositol 1-phosphate synthase</fullName>
        <shortName>MI-1-P synthase</shortName>
        <shortName>MIP synthase</shortName>
    </alternativeName>
</protein>
<name>INO1_MYCS2</name>
<keyword id="KW-0398">Inositol biosynthesis</keyword>
<keyword id="KW-0413">Isomerase</keyword>
<keyword id="KW-1017">Isopeptide bond</keyword>
<keyword id="KW-0520">NAD</keyword>
<keyword id="KW-1185">Reference proteome</keyword>
<keyword id="KW-0832">Ubl conjugation</keyword>